<accession>B8NM72</accession>
<sequence>MKSVATSSLDDVDKDSVPLGSSINGTAQAETPLENVIDVESVRSHFPVLGGETAAFNNASGTVVLKEAIESTSNFMYSFPFPPGVDAKSMEAITAYTGNKGKVAAFINALPDEITFGQSTTCLFRLLGLSLKPMLNNDCEIVCSTLCHEAAASAWIHLSRELGITIKWWSPTTTPNSPDDPVLTTDSLKPLLSPKTRLVTCNHVSNVVGTIHPIREIADVVHTIPGCMLIVDGVACVPHRPVDVKELDVDFYCFSWYKLFGPHLGTLYASRKAQDRYMTSINHYFVSSSSLDGKLALGMPSFELQLMCSPIVSYLQDTVGWDRIVRQETVLVTILLEYLLSKPSVYRVFGRRNSDPSQRVAIVTFEVVGRSSGDVAMRVNTRNRFRITSGICLAPRPTWDVLKPKSSDGLVRVSFVHYNTVEEVRAFCSELDEIVTRDT</sequence>
<evidence type="ECO:0000250" key="1">
    <source>
        <dbReference type="UniProtKB" id="O29689"/>
    </source>
</evidence>
<evidence type="ECO:0000250" key="2">
    <source>
        <dbReference type="UniProtKB" id="P0A6B9"/>
    </source>
</evidence>
<evidence type="ECO:0000256" key="3">
    <source>
        <dbReference type="SAM" id="MobiDB-lite"/>
    </source>
</evidence>
<evidence type="ECO:0000269" key="4">
    <source>
    </source>
</evidence>
<evidence type="ECO:0000269" key="5">
    <source>
    </source>
</evidence>
<evidence type="ECO:0000269" key="6">
    <source>
    </source>
</evidence>
<evidence type="ECO:0000303" key="7">
    <source>
    </source>
</evidence>
<evidence type="ECO:0000305" key="8"/>
<evidence type="ECO:0000305" key="9">
    <source>
    </source>
</evidence>
<evidence type="ECO:0007829" key="10">
    <source>
        <dbReference type="PDB" id="7MKV"/>
    </source>
</evidence>
<keyword id="KW-0002">3D-structure</keyword>
<keyword id="KW-0663">Pyridoxal phosphate</keyword>
<keyword id="KW-0808">Transferase</keyword>
<protein>
    <recommendedName>
        <fullName evidence="7">Cysteine desulfurase-like protein ustD</fullName>
        <ecNumber evidence="9">2.-.-.-</ecNumber>
    </recommendedName>
    <alternativeName>
        <fullName evidence="7">Ustiloxin B biosynthesis protein D</fullName>
    </alternativeName>
</protein>
<organism>
    <name type="scientific">Aspergillus flavus (strain ATCC 200026 / FGSC A1120 / IAM 13836 / NRRL 3357 / JCM 12722 / SRRC 167)</name>
    <dbReference type="NCBI Taxonomy" id="332952"/>
    <lineage>
        <taxon>Eukaryota</taxon>
        <taxon>Fungi</taxon>
        <taxon>Dikarya</taxon>
        <taxon>Ascomycota</taxon>
        <taxon>Pezizomycotina</taxon>
        <taxon>Eurotiomycetes</taxon>
        <taxon>Eurotiomycetidae</taxon>
        <taxon>Eurotiales</taxon>
        <taxon>Aspergillaceae</taxon>
        <taxon>Aspergillus</taxon>
        <taxon>Aspergillus subgen. Circumdati</taxon>
    </lineage>
</organism>
<name>USTD_ASPFN</name>
<reference key="1">
    <citation type="journal article" date="2015" name="Genome Announc.">
        <title>Genome sequence of Aspergillus flavus NRRL 3357, a strain that causes aflatoxin contamination of food and feed.</title>
        <authorList>
            <person name="Nierman W.C."/>
            <person name="Yu J."/>
            <person name="Fedorova-Abrams N.D."/>
            <person name="Losada L."/>
            <person name="Cleveland T.E."/>
            <person name="Bhatnagar D."/>
            <person name="Bennett J.W."/>
            <person name="Dean R."/>
            <person name="Payne G.A."/>
        </authorList>
    </citation>
    <scope>NUCLEOTIDE SEQUENCE [LARGE SCALE GENOMIC DNA]</scope>
    <source>
        <strain>ATCC 200026 / FGSC A1120 / IAM 13836 / NRRL 3357 / JCM 12722 / SRRC 167</strain>
    </source>
</reference>
<reference key="2">
    <citation type="journal article" date="2014" name="Fungal Genet. Biol.">
        <title>Characterization of the biosynthetic gene cluster for the ribosomally synthesized cyclic peptide ustiloxin B in Aspergillus flavus.</title>
        <authorList>
            <person name="Umemura M."/>
            <person name="Nagano N."/>
            <person name="Koike H."/>
            <person name="Kawano J."/>
            <person name="Ishii T."/>
            <person name="Miyamura Y."/>
            <person name="Kikuchi M."/>
            <person name="Tamano K."/>
            <person name="Yu J."/>
            <person name="Shin-ya K."/>
            <person name="Machida M."/>
        </authorList>
    </citation>
    <scope>FUNCTION</scope>
    <scope>DISRUPTION PHENOTYPE</scope>
</reference>
<reference key="3">
    <citation type="journal article" date="2016" name="Angew. Chem. Int. Ed.">
        <title>Unveiling the biosynthetic pathway of the ribosomally synthesized and post-translationally modified peptide ustiloxin B in filamentous fungi.</title>
        <authorList>
            <person name="Ye Y."/>
            <person name="Minami A."/>
            <person name="Igarashi Y."/>
            <person name="Izumikawa M."/>
            <person name="Umemura M."/>
            <person name="Nagano N."/>
            <person name="Machida M."/>
            <person name="Kawahara T."/>
            <person name="Shin-Ya K."/>
            <person name="Gomi K."/>
            <person name="Oikawa H."/>
        </authorList>
    </citation>
    <scope>FUNCTION</scope>
    <scope>DISRUPTION PHENOTYPE</scope>
    <scope>CATALYTIC ACTIVITY</scope>
</reference>
<reference key="4">
    <citation type="journal article" date="2016" name="Fungal Genet. Biol.">
        <title>Class of cyclic ribosomal peptide synthetic genes in filamentous fungi.</title>
        <authorList>
            <person name="Nagano N."/>
            <person name="Umemura M."/>
            <person name="Izumikawa M."/>
            <person name="Kawano J."/>
            <person name="Ishii T."/>
            <person name="Kikuchi M."/>
            <person name="Tomii K."/>
            <person name="Kumagai T."/>
            <person name="Yoshimi A."/>
            <person name="Machida M."/>
            <person name="Abe K."/>
            <person name="Shin-ya K."/>
            <person name="Asai K."/>
        </authorList>
    </citation>
    <scope>FUNCTION</scope>
    <scope>DISRUPTION PHENOTYPE</scope>
</reference>
<comment type="function">
    <text evidence="4 5 6">Cysteine desulfurase-like protein; part of the gene cluster that mediates the biosynthesis of the secondary metabolite ustiloxin B, an antimitotic tetrapeptide (PubMed:24841822, PubMed:26703898, PubMed:27166860). First, ustA is processed by the subtilisin-like endoprotease Kex2 that is outside the ustiloxin B gene cluster, at the C-terminal side of Arg-Lys, after transfer to Golgi apparatus through the endoplasmic reticulum (ER) (PubMed:24841822). Cleavage by KEX2 generates 16 peptides YAIG-I to YAIG-XVI (PubMed:24841822). To process the precursor peptide further, at least two peptidases are necessary to cleave the N-terminal and C-terminal sides of the Tyr-Ala-Ile-Gly core peptide which serves as backbone for the synthesis of ustiloxin B, through cyclization and modification of the tyrosine with a non-protein coding amino acid, norvaline (PubMed:24841822). One of the two peptidases must be the serine peptidase ustP; and the other pepdidase is probably ustH (PubMed:24841822). Macrocyclization of the core peptide derived from ustA requires the tyrosinase ustQ, as well as the homologous oxidases ustYa and ustYb, and leads to the production of the first cyclization product N-desmethylustiloxin F (PubMed:26703898, PubMed:27166860). For the formation of N-desmethylustiloxin F, three oxidation steps are required, hydroxylation at the benzylic position, hydroxylation at either the aromatic ring of Tyr or beta-position of Ile, and oxidative cyclization (PubMed:27166860). UstQ may catalyze the oxidation of a phenol moiety, whereas the ustYa and ustYb are most likely responsible for the remaining two-step oxidations (PubMed:27166860). N-desmethylustiloxin F is then methylated by ustM to yield ustiloxin F which in turn substrate of the cytochrome P450 monooxygenase ustC which catalyzes the formation of S-deoxyustiloxin H (PubMed:27166860). The flavoprotein monooxygenases ustF1 and ustF2 then participate in the modification of the side chain of S-deoxyustiloxin H, leading to the synthesis of an oxime intermediate, via ustiloxin H (PubMed:27166860). Finally, carboxylative dehydration performed by the cysteine desulfurase-like protein ustD yields ustiloxin B (PubMed:27166860).</text>
</comment>
<comment type="cofactor">
    <cofactor evidence="2">
        <name>pyridoxal 5'-phosphate</name>
        <dbReference type="ChEBI" id="CHEBI:597326"/>
    </cofactor>
</comment>
<comment type="pathway">
    <text evidence="6">Mycotoxin biosynthesis.</text>
</comment>
<comment type="disruption phenotype">
    <text evidence="4 5 6">Impairs the production of ustiloxin B but accumulates intermediates such as ustiloxin F and C (PubMed:24841822, PubMed:26703898, PubMed:27166860).</text>
</comment>
<comment type="similarity">
    <text evidence="8">Belongs to the class-V pyridoxal-phosphate-dependent aminotransferase family.</text>
</comment>
<dbReference type="EC" id="2.-.-.-" evidence="9"/>
<dbReference type="EMBL" id="EQ963480">
    <property type="protein sequence ID" value="EED49423.1"/>
    <property type="molecule type" value="Genomic_DNA"/>
</dbReference>
<dbReference type="RefSeq" id="XP_002381324.1">
    <property type="nucleotide sequence ID" value="XM_002381283.1"/>
</dbReference>
<dbReference type="PDB" id="7MKV">
    <property type="method" value="X-ray"/>
    <property type="resolution" value="2.25 A"/>
    <property type="chains" value="A/B/C=1-439"/>
</dbReference>
<dbReference type="PDBsum" id="7MKV"/>
<dbReference type="SMR" id="B8NM72"/>
<dbReference type="STRING" id="332952.B8NM72"/>
<dbReference type="EnsemblFungi" id="EED49423">
    <property type="protein sequence ID" value="EED49423"/>
    <property type="gene ID" value="AFLA_095040"/>
</dbReference>
<dbReference type="VEuPathDB" id="FungiDB:AFLA_009742"/>
<dbReference type="eggNOG" id="KOG1549">
    <property type="taxonomic scope" value="Eukaryota"/>
</dbReference>
<dbReference type="HOGENOM" id="CLU_003433_2_2_1"/>
<dbReference type="OMA" id="AQDRYMT"/>
<dbReference type="GO" id="GO:0016740">
    <property type="term" value="F:transferase activity"/>
    <property type="evidence" value="ECO:0007669"/>
    <property type="project" value="UniProtKB-KW"/>
</dbReference>
<dbReference type="Gene3D" id="3.90.1150.10">
    <property type="entry name" value="Aspartate Aminotransferase, domain 1"/>
    <property type="match status" value="1"/>
</dbReference>
<dbReference type="Gene3D" id="3.40.640.10">
    <property type="entry name" value="Type I PLP-dependent aspartate aminotransferase-like (Major domain)"/>
    <property type="match status" value="1"/>
</dbReference>
<dbReference type="InterPro" id="IPR000192">
    <property type="entry name" value="Aminotrans_V_dom"/>
</dbReference>
<dbReference type="InterPro" id="IPR015424">
    <property type="entry name" value="PyrdxlP-dep_Trfase"/>
</dbReference>
<dbReference type="InterPro" id="IPR015421">
    <property type="entry name" value="PyrdxlP-dep_Trfase_major"/>
</dbReference>
<dbReference type="InterPro" id="IPR015422">
    <property type="entry name" value="PyrdxlP-dep_Trfase_small"/>
</dbReference>
<dbReference type="PANTHER" id="PTHR43586">
    <property type="entry name" value="CYSTEINE DESULFURASE"/>
    <property type="match status" value="1"/>
</dbReference>
<dbReference type="PANTHER" id="PTHR43586:SF21">
    <property type="entry name" value="PYRIDOXAL PHOSPHATE (PLP)-DEPENDENT ASPARTATE AMINOTRANSFERASE SUPERFAMILY"/>
    <property type="match status" value="1"/>
</dbReference>
<dbReference type="Pfam" id="PF00266">
    <property type="entry name" value="Aminotran_5"/>
    <property type="match status" value="1"/>
</dbReference>
<dbReference type="SUPFAM" id="SSF53383">
    <property type="entry name" value="PLP-dependent transferases"/>
    <property type="match status" value="1"/>
</dbReference>
<feature type="chain" id="PRO_0000437301" description="Cysteine desulfurase-like protein ustD">
    <location>
        <begin position="1"/>
        <end position="439"/>
    </location>
</feature>
<feature type="region of interest" description="Disordered" evidence="3">
    <location>
        <begin position="1"/>
        <end position="25"/>
    </location>
</feature>
<feature type="binding site" evidence="2">
    <location>
        <begin position="120"/>
        <end position="121"/>
    </location>
    <ligand>
        <name>pyridoxal 5'-phosphate</name>
        <dbReference type="ChEBI" id="CHEBI:597326"/>
    </ligand>
</feature>
<feature type="binding site" evidence="1">
    <location>
        <position position="206"/>
    </location>
    <ligand>
        <name>pyridoxal 5'-phosphate</name>
        <dbReference type="ChEBI" id="CHEBI:597326"/>
    </ligand>
</feature>
<feature type="binding site" evidence="2">
    <location>
        <begin position="255"/>
        <end position="257"/>
    </location>
    <ligand>
        <name>pyridoxal 5'-phosphate</name>
        <dbReference type="ChEBI" id="CHEBI:597326"/>
    </ligand>
</feature>
<feature type="modified residue" description="N6-(pyridoxal phosphate)lysine" evidence="2">
    <location>
        <position position="258"/>
    </location>
</feature>
<feature type="helix" evidence="10">
    <location>
        <begin position="39"/>
        <end position="43"/>
    </location>
</feature>
<feature type="helix" evidence="10">
    <location>
        <begin position="47"/>
        <end position="50"/>
    </location>
</feature>
<feature type="strand" evidence="10">
    <location>
        <begin position="51"/>
        <end position="55"/>
    </location>
</feature>
<feature type="helix" evidence="10">
    <location>
        <begin position="66"/>
        <end position="77"/>
    </location>
</feature>
<feature type="helix" evidence="10">
    <location>
        <begin position="87"/>
        <end position="106"/>
    </location>
</feature>
<feature type="helix" evidence="10">
    <location>
        <begin position="111"/>
        <end position="113"/>
    </location>
</feature>
<feature type="strand" evidence="10">
    <location>
        <begin position="114"/>
        <end position="118"/>
    </location>
</feature>
<feature type="helix" evidence="10">
    <location>
        <begin position="120"/>
        <end position="131"/>
    </location>
</feature>
<feature type="helix" evidence="10">
    <location>
        <begin position="132"/>
        <end position="134"/>
    </location>
</feature>
<feature type="strand" evidence="10">
    <location>
        <begin position="139"/>
        <end position="144"/>
    </location>
</feature>
<feature type="helix" evidence="10">
    <location>
        <begin position="149"/>
        <end position="162"/>
    </location>
</feature>
<feature type="strand" evidence="10">
    <location>
        <begin position="167"/>
        <end position="169"/>
    </location>
</feature>
<feature type="strand" evidence="10">
    <location>
        <begin position="172"/>
        <end position="174"/>
    </location>
</feature>
<feature type="strand" evidence="10">
    <location>
        <begin position="177"/>
        <end position="182"/>
    </location>
</feature>
<feature type="helix" evidence="10">
    <location>
        <begin position="185"/>
        <end position="188"/>
    </location>
</feature>
<feature type="helix" evidence="10">
    <location>
        <begin position="189"/>
        <end position="191"/>
    </location>
</feature>
<feature type="strand" evidence="10">
    <location>
        <begin position="196"/>
        <end position="204"/>
    </location>
</feature>
<feature type="turn" evidence="10">
    <location>
        <begin position="206"/>
        <end position="208"/>
    </location>
</feature>
<feature type="helix" evidence="10">
    <location>
        <begin position="214"/>
        <end position="221"/>
    </location>
</feature>
<feature type="strand" evidence="10">
    <location>
        <begin position="228"/>
        <end position="232"/>
    </location>
</feature>
<feature type="turn" evidence="10">
    <location>
        <begin position="234"/>
        <end position="239"/>
    </location>
</feature>
<feature type="helix" evidence="10">
    <location>
        <begin position="244"/>
        <end position="247"/>
    </location>
</feature>
<feature type="strand" evidence="10">
    <location>
        <begin position="250"/>
        <end position="255"/>
    </location>
</feature>
<feature type="strand" evidence="10">
    <location>
        <begin position="265"/>
        <end position="269"/>
    </location>
</feature>
<feature type="helix" evidence="10">
    <location>
        <begin position="271"/>
        <end position="277"/>
    </location>
</feature>
<feature type="helix" evidence="10">
    <location>
        <begin position="291"/>
        <end position="295"/>
    </location>
</feature>
<feature type="helix" evidence="10">
    <location>
        <begin position="302"/>
        <end position="305"/>
    </location>
</feature>
<feature type="helix" evidence="10">
    <location>
        <begin position="308"/>
        <end position="316"/>
    </location>
</feature>
<feature type="turn" evidence="10">
    <location>
        <begin position="317"/>
        <end position="319"/>
    </location>
</feature>
<feature type="helix" evidence="10">
    <location>
        <begin position="321"/>
        <end position="340"/>
    </location>
</feature>
<feature type="turn" evidence="10">
    <location>
        <begin position="343"/>
        <end position="345"/>
    </location>
</feature>
<feature type="strand" evidence="10">
    <location>
        <begin position="346"/>
        <end position="348"/>
    </location>
</feature>
<feature type="turn" evidence="10">
    <location>
        <begin position="356"/>
        <end position="358"/>
    </location>
</feature>
<feature type="strand" evidence="10">
    <location>
        <begin position="361"/>
        <end position="367"/>
    </location>
</feature>
<feature type="helix" evidence="10">
    <location>
        <begin position="372"/>
        <end position="382"/>
    </location>
</feature>
<feature type="strand" evidence="10">
    <location>
        <begin position="384"/>
        <end position="386"/>
    </location>
</feature>
<feature type="strand" evidence="10">
    <location>
        <begin position="388"/>
        <end position="390"/>
    </location>
</feature>
<feature type="helix" evidence="10">
    <location>
        <begin position="395"/>
        <end position="400"/>
    </location>
</feature>
<feature type="strand" evidence="10">
    <location>
        <begin position="410"/>
        <end position="414"/>
    </location>
</feature>
<feature type="helix" evidence="10">
    <location>
        <begin position="421"/>
        <end position="436"/>
    </location>
</feature>
<proteinExistence type="evidence at protein level"/>
<gene>
    <name evidence="7" type="primary">ustD</name>
    <name type="ORF">AFLA_095040</name>
</gene>